<dbReference type="EMBL" id="X97644">
    <property type="protein sequence ID" value="CAA66244.1"/>
    <property type="molecule type" value="Genomic_DNA"/>
</dbReference>
<dbReference type="EMBL" id="Z72631">
    <property type="protein sequence ID" value="CAA96816.1"/>
    <property type="molecule type" value="Genomic_DNA"/>
</dbReference>
<dbReference type="EMBL" id="BK006941">
    <property type="protein sequence ID" value="DAA07999.1"/>
    <property type="molecule type" value="Genomic_DNA"/>
</dbReference>
<dbReference type="PIR" id="S64116">
    <property type="entry name" value="S64116"/>
</dbReference>
<dbReference type="RefSeq" id="NP_011407.3">
    <property type="nucleotide sequence ID" value="NM_001180973.3"/>
</dbReference>
<dbReference type="SMR" id="P53139"/>
<dbReference type="BioGRID" id="33142">
    <property type="interactions" value="36"/>
</dbReference>
<dbReference type="FunCoup" id="P53139">
    <property type="interactions" value="50"/>
</dbReference>
<dbReference type="IntAct" id="P53139">
    <property type="interactions" value="13"/>
</dbReference>
<dbReference type="MINT" id="P53139"/>
<dbReference type="STRING" id="4932.YGL108C"/>
<dbReference type="iPTMnet" id="P53139"/>
<dbReference type="SwissPalm" id="P53139"/>
<dbReference type="PaxDb" id="4932-YGL108C"/>
<dbReference type="PeptideAtlas" id="P53139"/>
<dbReference type="EnsemblFungi" id="YGL108C_mRNA">
    <property type="protein sequence ID" value="YGL108C"/>
    <property type="gene ID" value="YGL108C"/>
</dbReference>
<dbReference type="GeneID" id="852770"/>
<dbReference type="KEGG" id="sce:YGL108C"/>
<dbReference type="AGR" id="SGD:S000003076"/>
<dbReference type="SGD" id="S000003076">
    <property type="gene designation" value="YGL108C"/>
</dbReference>
<dbReference type="VEuPathDB" id="FungiDB:YGL108C"/>
<dbReference type="eggNOG" id="ENOG502S7W1">
    <property type="taxonomic scope" value="Eukaryota"/>
</dbReference>
<dbReference type="HOGENOM" id="CLU_154049_0_0_1"/>
<dbReference type="InParanoid" id="P53139"/>
<dbReference type="OMA" id="TSKPHIR"/>
<dbReference type="OrthoDB" id="4036141at2759"/>
<dbReference type="BioCyc" id="YEAST:G3O-30607-MONOMER"/>
<dbReference type="BioGRID-ORCS" id="852770">
    <property type="hits" value="4 hits in 10 CRISPR screens"/>
</dbReference>
<dbReference type="PRO" id="PR:P53139"/>
<dbReference type="Proteomes" id="UP000002311">
    <property type="component" value="Chromosome VII"/>
</dbReference>
<dbReference type="RNAct" id="P53139">
    <property type="molecule type" value="protein"/>
</dbReference>
<dbReference type="GO" id="GO:0005829">
    <property type="term" value="C:cytosol"/>
    <property type="evidence" value="ECO:0007005"/>
    <property type="project" value="SGD"/>
</dbReference>
<dbReference type="InterPro" id="IPR031632">
    <property type="entry name" value="SVIP"/>
</dbReference>
<dbReference type="Pfam" id="PF15811">
    <property type="entry name" value="SVIP"/>
    <property type="match status" value="1"/>
</dbReference>
<keyword id="KW-0963">Cytoplasm</keyword>
<keyword id="KW-0449">Lipoprotein</keyword>
<keyword id="KW-0519">Myristate</keyword>
<keyword id="KW-0564">Palmitate</keyword>
<keyword id="KW-1185">Reference proteome</keyword>
<name>YGK8_YEAST</name>
<comment type="subcellular location">
    <subcellularLocation>
        <location evidence="7">Cytoplasm</location>
        <location evidence="7">Cytosol</location>
    </subcellularLocation>
    <text evidence="3 7">The protein localizes to the cytosol when tagged with a fluorescent protein at the C-terminus, and to the cell periphery when tagged with a fluorescent protein at the C-terminus.</text>
</comment>
<comment type="PTM">
    <text evidence="6">Myristoylated.</text>
</comment>
<comment type="PTM">
    <text evidence="5 6">The N-myristoylated protein is further palmitoylated by ERF2, PFA4 and slightly by PFA5, but not by PFA3.</text>
</comment>
<comment type="miscellaneous">
    <text evidence="4">Present with 2430 molecules/cell in log phase SD medium.</text>
</comment>
<comment type="similarity">
    <text evidence="8">To S.pombe new13.</text>
</comment>
<protein>
    <recommendedName>
        <fullName>Uncharacterized protein YGL108C</fullName>
    </recommendedName>
</protein>
<accession>P53139</accession>
<accession>D6VU38</accession>
<gene>
    <name type="ordered locus">YGL108C</name>
    <name type="ORF">G3070</name>
</gene>
<reference key="1">
    <citation type="journal article" date="1997" name="Yeast">
        <title>The genes encoding the transcription factor yTAFII60, the G4p1 protein and a putative glucose transporter are contained in a 12.3 kb DNA fragment on the left arm of Saccharomyces cerevisiae chromosome VII.</title>
        <authorList>
            <person name="Paoluzi S."/>
            <person name="Minenkova O."/>
            <person name="Castagnoli L."/>
        </authorList>
    </citation>
    <scope>NUCLEOTIDE SEQUENCE [GENOMIC DNA]</scope>
</reference>
<reference key="2">
    <citation type="journal article" date="1997" name="Nature">
        <title>The nucleotide sequence of Saccharomyces cerevisiae chromosome VII.</title>
        <authorList>
            <person name="Tettelin H."/>
            <person name="Agostoni-Carbone M.L."/>
            <person name="Albermann K."/>
            <person name="Albers M."/>
            <person name="Arroyo J."/>
            <person name="Backes U."/>
            <person name="Barreiros T."/>
            <person name="Bertani I."/>
            <person name="Bjourson A.J."/>
            <person name="Brueckner M."/>
            <person name="Bruschi C.V."/>
            <person name="Carignani G."/>
            <person name="Castagnoli L."/>
            <person name="Cerdan E."/>
            <person name="Clemente M.L."/>
            <person name="Coblenz A."/>
            <person name="Coglievina M."/>
            <person name="Coissac E."/>
            <person name="Defoor E."/>
            <person name="Del Bino S."/>
            <person name="Delius H."/>
            <person name="Delneri D."/>
            <person name="de Wergifosse P."/>
            <person name="Dujon B."/>
            <person name="Durand P."/>
            <person name="Entian K.-D."/>
            <person name="Eraso P."/>
            <person name="Escribano V."/>
            <person name="Fabiani L."/>
            <person name="Fartmann B."/>
            <person name="Feroli F."/>
            <person name="Feuermann M."/>
            <person name="Frontali L."/>
            <person name="Garcia-Gonzalez M."/>
            <person name="Garcia-Saez M.I."/>
            <person name="Goffeau A."/>
            <person name="Guerreiro P."/>
            <person name="Hani J."/>
            <person name="Hansen M."/>
            <person name="Hebling U."/>
            <person name="Hernandez K."/>
            <person name="Heumann K."/>
            <person name="Hilger F."/>
            <person name="Hofmann B."/>
            <person name="Indge K.J."/>
            <person name="James C.M."/>
            <person name="Klima R."/>
            <person name="Koetter P."/>
            <person name="Kramer B."/>
            <person name="Kramer W."/>
            <person name="Lauquin G."/>
            <person name="Leuther H."/>
            <person name="Louis E.J."/>
            <person name="Maillier E."/>
            <person name="Marconi A."/>
            <person name="Martegani E."/>
            <person name="Mazon M.J."/>
            <person name="Mazzoni C."/>
            <person name="McReynolds A.D.K."/>
            <person name="Melchioretto P."/>
            <person name="Mewes H.-W."/>
            <person name="Minenkova O."/>
            <person name="Mueller-Auer S."/>
            <person name="Nawrocki A."/>
            <person name="Netter P."/>
            <person name="Neu R."/>
            <person name="Nombela C."/>
            <person name="Oliver S.G."/>
            <person name="Panzeri L."/>
            <person name="Paoluzi S."/>
            <person name="Plevani P."/>
            <person name="Portetelle D."/>
            <person name="Portillo F."/>
            <person name="Potier S."/>
            <person name="Purnelle B."/>
            <person name="Rieger M."/>
            <person name="Riles L."/>
            <person name="Rinaldi T."/>
            <person name="Robben J."/>
            <person name="Rodrigues-Pousada C."/>
            <person name="Rodriguez-Belmonte E."/>
            <person name="Rodriguez-Torres A.M."/>
            <person name="Rose M."/>
            <person name="Ruzzi M."/>
            <person name="Saliola M."/>
            <person name="Sanchez-Perez M."/>
            <person name="Schaefer B."/>
            <person name="Schaefer M."/>
            <person name="Scharfe M."/>
            <person name="Schmidheini T."/>
            <person name="Schreer A."/>
            <person name="Skala J."/>
            <person name="Souciet J.-L."/>
            <person name="Steensma H.Y."/>
            <person name="Talla E."/>
            <person name="Thierry A."/>
            <person name="Vandenbol M."/>
            <person name="van der Aart Q.J.M."/>
            <person name="Van Dyck L."/>
            <person name="Vanoni M."/>
            <person name="Verhasselt P."/>
            <person name="Voet M."/>
            <person name="Volckaert G."/>
            <person name="Wambutt R."/>
            <person name="Watson M.D."/>
            <person name="Weber N."/>
            <person name="Wedler E."/>
            <person name="Wedler H."/>
            <person name="Wipfli P."/>
            <person name="Wolf K."/>
            <person name="Wright L.F."/>
            <person name="Zaccaria P."/>
            <person name="Zimmermann M."/>
            <person name="Zollner A."/>
            <person name="Kleine K."/>
        </authorList>
    </citation>
    <scope>NUCLEOTIDE SEQUENCE [LARGE SCALE GENOMIC DNA]</scope>
    <source>
        <strain>ATCC 204508 / S288c</strain>
    </source>
</reference>
<reference key="3">
    <citation type="journal article" date="2014" name="G3 (Bethesda)">
        <title>The reference genome sequence of Saccharomyces cerevisiae: Then and now.</title>
        <authorList>
            <person name="Engel S.R."/>
            <person name="Dietrich F.S."/>
            <person name="Fisk D.G."/>
            <person name="Binkley G."/>
            <person name="Balakrishnan R."/>
            <person name="Costanzo M.C."/>
            <person name="Dwight S.S."/>
            <person name="Hitz B.C."/>
            <person name="Karra K."/>
            <person name="Nash R.S."/>
            <person name="Weng S."/>
            <person name="Wong E.D."/>
            <person name="Lloyd P."/>
            <person name="Skrzypek M.S."/>
            <person name="Miyasato S.R."/>
            <person name="Simison M."/>
            <person name="Cherry J.M."/>
        </authorList>
    </citation>
    <scope>GENOME REANNOTATION</scope>
    <source>
        <strain>ATCC 204508 / S288c</strain>
    </source>
</reference>
<reference key="4">
    <citation type="journal article" date="2003" name="Nature">
        <title>Global analysis of protein localization in budding yeast.</title>
        <authorList>
            <person name="Huh W.-K."/>
            <person name="Falvo J.V."/>
            <person name="Gerke L.C."/>
            <person name="Carroll A.S."/>
            <person name="Howson R.W."/>
            <person name="Weissman J.S."/>
            <person name="O'Shea E.K."/>
        </authorList>
    </citation>
    <scope>SUBCELLULAR LOCATION [LARGE SCALE ANALYSIS]</scope>
</reference>
<reference key="5">
    <citation type="journal article" date="2003" name="Nature">
        <title>Global analysis of protein expression in yeast.</title>
        <authorList>
            <person name="Ghaemmaghami S."/>
            <person name="Huh W.-K."/>
            <person name="Bower K."/>
            <person name="Howson R.W."/>
            <person name="Belle A."/>
            <person name="Dephoure N."/>
            <person name="O'Shea E.K."/>
            <person name="Weissman J.S."/>
        </authorList>
    </citation>
    <scope>LEVEL OF PROTEIN EXPRESSION [LARGE SCALE ANALYSIS]</scope>
</reference>
<reference key="6">
    <citation type="journal article" date="2006" name="Cell">
        <title>Global analysis of protein palmitoylation in yeast.</title>
        <authorList>
            <person name="Roth A.F."/>
            <person name="Wan J."/>
            <person name="Bailey A.O."/>
            <person name="Sun B."/>
            <person name="Kuchar J.A."/>
            <person name="Green W.N."/>
            <person name="Phinney B.S."/>
            <person name="Yates J.R. III"/>
            <person name="Davis N.G."/>
        </authorList>
    </citation>
    <scope>PALMITOYLATION</scope>
</reference>
<reference key="7">
    <citation type="journal article" date="2009" name="J. Biol. Chem.">
        <title>Molecular recognition of the palmitoylation substrate Vac8 by its palmitoyltransferase Pfa3.</title>
        <authorList>
            <person name="Nadolski M.J."/>
            <person name="Linder M.E."/>
        </authorList>
    </citation>
    <scope>MYRISTOYLATION AT GLY-2</scope>
    <scope>PALMITOYLATION AT CYS-4 BY ERF2; PFA4 AND PFA5</scope>
</reference>
<reference key="8">
    <citation type="journal article" date="2016" name="Nat. Methods">
        <title>One library to make them all: streamlining the creation of yeast libraries via a SWAp-Tag strategy.</title>
        <authorList>
            <person name="Yofe I."/>
            <person name="Weill U."/>
            <person name="Meurer M."/>
            <person name="Chuartzman S."/>
            <person name="Zalckvar E."/>
            <person name="Goldman O."/>
            <person name="Ben-Dor S."/>
            <person name="Schuetze C."/>
            <person name="Wiedemann N."/>
            <person name="Knop M."/>
            <person name="Khmelinskii A."/>
            <person name="Schuldiner M."/>
        </authorList>
    </citation>
    <scope>SUBCELLULAR LOCATION [LARGE SCALE ANALYSIS]</scope>
</reference>
<proteinExistence type="evidence at protein level"/>
<evidence type="ECO:0000255" key="1"/>
<evidence type="ECO:0000256" key="2">
    <source>
        <dbReference type="SAM" id="MobiDB-lite"/>
    </source>
</evidence>
<evidence type="ECO:0000269" key="3">
    <source>
    </source>
</evidence>
<evidence type="ECO:0000269" key="4">
    <source>
    </source>
</evidence>
<evidence type="ECO:0000269" key="5">
    <source>
    </source>
</evidence>
<evidence type="ECO:0000269" key="6">
    <source>
    </source>
</evidence>
<evidence type="ECO:0000269" key="7">
    <source>
    </source>
</evidence>
<evidence type="ECO:0000305" key="8"/>
<evidence type="ECO:0000305" key="9">
    <source>
    </source>
</evidence>
<organism>
    <name type="scientific">Saccharomyces cerevisiae (strain ATCC 204508 / S288c)</name>
    <name type="common">Baker's yeast</name>
    <dbReference type="NCBI Taxonomy" id="559292"/>
    <lineage>
        <taxon>Eukaryota</taxon>
        <taxon>Fungi</taxon>
        <taxon>Dikarya</taxon>
        <taxon>Ascomycota</taxon>
        <taxon>Saccharomycotina</taxon>
        <taxon>Saccharomycetes</taxon>
        <taxon>Saccharomycetales</taxon>
        <taxon>Saccharomycetaceae</taxon>
        <taxon>Saccharomyces</taxon>
    </lineage>
</organism>
<sequence>MGLCGSKTQPMPSQTTTVATKARTKPINRDTVKSKQELRHKEKKDKKKKTQLKSTTVPVVQRKEGSKLTDTSDPSKNKVSPKEAARLAAEKRFQETNEKYNKGELGKKLAQERAKSHKTRLMEEAEKKHAERERENMIYD</sequence>
<feature type="initiator methionine" description="Removed" evidence="1">
    <location>
        <position position="1"/>
    </location>
</feature>
<feature type="chain" id="PRO_0000202751" description="Uncharacterized protein YGL108C">
    <location>
        <begin position="2"/>
        <end position="140"/>
    </location>
</feature>
<feature type="region of interest" description="Disordered" evidence="2">
    <location>
        <begin position="1"/>
        <end position="140"/>
    </location>
</feature>
<feature type="compositionally biased region" description="Polar residues" evidence="2">
    <location>
        <begin position="1"/>
        <end position="19"/>
    </location>
</feature>
<feature type="compositionally biased region" description="Basic and acidic residues" evidence="2">
    <location>
        <begin position="27"/>
        <end position="40"/>
    </location>
</feature>
<feature type="compositionally biased region" description="Basic residues" evidence="2">
    <location>
        <begin position="41"/>
        <end position="51"/>
    </location>
</feature>
<feature type="compositionally biased region" description="Basic and acidic residues" evidence="2">
    <location>
        <begin position="73"/>
        <end position="140"/>
    </location>
</feature>
<feature type="lipid moiety-binding region" description="N-myristoyl glycine" evidence="1 6">
    <location>
        <position position="2"/>
    </location>
</feature>
<feature type="lipid moiety-binding region" description="S-palmitoyl cysteine" evidence="9">
    <location>
        <position position="4"/>
    </location>
</feature>